<organism>
    <name type="scientific">Mycobacterium bovis (strain ATCC BAA-935 / AF2122/97)</name>
    <dbReference type="NCBI Taxonomy" id="233413"/>
    <lineage>
        <taxon>Bacteria</taxon>
        <taxon>Bacillati</taxon>
        <taxon>Actinomycetota</taxon>
        <taxon>Actinomycetes</taxon>
        <taxon>Mycobacteriales</taxon>
        <taxon>Mycobacteriaceae</taxon>
        <taxon>Mycobacterium</taxon>
        <taxon>Mycobacterium tuberculosis complex</taxon>
    </lineage>
</organism>
<reference key="1">
    <citation type="journal article" date="2003" name="Proc. Natl. Acad. Sci. U.S.A.">
        <title>The complete genome sequence of Mycobacterium bovis.</title>
        <authorList>
            <person name="Garnier T."/>
            <person name="Eiglmeier K."/>
            <person name="Camus J.-C."/>
            <person name="Medina N."/>
            <person name="Mansoor H."/>
            <person name="Pryor M."/>
            <person name="Duthoy S."/>
            <person name="Grondin S."/>
            <person name="Lacroix C."/>
            <person name="Monsempe C."/>
            <person name="Simon S."/>
            <person name="Harris B."/>
            <person name="Atkin R."/>
            <person name="Doggett J."/>
            <person name="Mayes R."/>
            <person name="Keating L."/>
            <person name="Wheeler P.R."/>
            <person name="Parkhill J."/>
            <person name="Barrell B.G."/>
            <person name="Cole S.T."/>
            <person name="Gordon S.V."/>
            <person name="Hewinson R.G."/>
        </authorList>
    </citation>
    <scope>NUCLEOTIDE SEQUENCE [LARGE SCALE GENOMIC DNA]</scope>
    <source>
        <strain>ATCC BAA-935 / AF2122/97</strain>
    </source>
</reference>
<reference key="2">
    <citation type="journal article" date="2017" name="Genome Announc.">
        <title>Updated reference genome sequence and annotation of Mycobacterium bovis AF2122/97.</title>
        <authorList>
            <person name="Malone K.M."/>
            <person name="Farrell D."/>
            <person name="Stuber T.P."/>
            <person name="Schubert O.T."/>
            <person name="Aebersold R."/>
            <person name="Robbe-Austerman S."/>
            <person name="Gordon S.V."/>
        </authorList>
    </citation>
    <scope>NUCLEOTIDE SEQUENCE [LARGE SCALE GENOMIC DNA]</scope>
    <scope>GENOME REANNOTATION</scope>
    <source>
        <strain>ATCC BAA-935 / AF2122/97</strain>
    </source>
</reference>
<protein>
    <recommendedName>
        <fullName evidence="1">Dihydroorotase</fullName>
        <shortName evidence="1">DHOase</shortName>
        <ecNumber evidence="1">3.5.2.3</ecNumber>
    </recommendedName>
</protein>
<keyword id="KW-0378">Hydrolase</keyword>
<keyword id="KW-0479">Metal-binding</keyword>
<keyword id="KW-0665">Pyrimidine biosynthesis</keyword>
<keyword id="KW-1185">Reference proteome</keyword>
<keyword id="KW-0862">Zinc</keyword>
<name>PYRC_MYCBO</name>
<accession>Q7U057</accession>
<accession>A0A1R3XY63</accession>
<accession>X2BHQ7</accession>
<feature type="chain" id="PRO_0000147242" description="Dihydroorotase">
    <location>
        <begin position="1"/>
        <end position="430"/>
    </location>
</feature>
<feature type="active site" evidence="1">
    <location>
        <position position="304"/>
    </location>
</feature>
<feature type="binding site" evidence="1">
    <location>
        <position position="57"/>
    </location>
    <ligand>
        <name>Zn(2+)</name>
        <dbReference type="ChEBI" id="CHEBI:29105"/>
        <label>1</label>
    </ligand>
</feature>
<feature type="binding site" evidence="1">
    <location>
        <begin position="59"/>
        <end position="61"/>
    </location>
    <ligand>
        <name>substrate</name>
    </ligand>
</feature>
<feature type="binding site" evidence="1">
    <location>
        <position position="59"/>
    </location>
    <ligand>
        <name>Zn(2+)</name>
        <dbReference type="ChEBI" id="CHEBI:29105"/>
        <label>1</label>
    </ligand>
</feature>
<feature type="binding site" evidence="1">
    <location>
        <position position="91"/>
    </location>
    <ligand>
        <name>substrate</name>
    </ligand>
</feature>
<feature type="binding site" evidence="1">
    <location>
        <position position="151"/>
    </location>
    <ligand>
        <name>Zn(2+)</name>
        <dbReference type="ChEBI" id="CHEBI:29105"/>
        <label>1</label>
    </ligand>
</feature>
<feature type="binding site" evidence="1">
    <location>
        <position position="151"/>
    </location>
    <ligand>
        <name>Zn(2+)</name>
        <dbReference type="ChEBI" id="CHEBI:29105"/>
        <label>2</label>
    </ligand>
</feature>
<feature type="binding site" evidence="1">
    <location>
        <position position="178"/>
    </location>
    <ligand>
        <name>Zn(2+)</name>
        <dbReference type="ChEBI" id="CHEBI:29105"/>
        <label>2</label>
    </ligand>
</feature>
<feature type="binding site" evidence="1">
    <location>
        <position position="231"/>
    </location>
    <ligand>
        <name>Zn(2+)</name>
        <dbReference type="ChEBI" id="CHEBI:29105"/>
        <label>2</label>
    </ligand>
</feature>
<feature type="binding site" evidence="1">
    <location>
        <position position="277"/>
    </location>
    <ligand>
        <name>substrate</name>
    </ligand>
</feature>
<feature type="binding site" evidence="1">
    <location>
        <position position="304"/>
    </location>
    <ligand>
        <name>Zn(2+)</name>
        <dbReference type="ChEBI" id="CHEBI:29105"/>
        <label>1</label>
    </ligand>
</feature>
<feature type="binding site" evidence="1">
    <location>
        <position position="308"/>
    </location>
    <ligand>
        <name>substrate</name>
    </ligand>
</feature>
<feature type="binding site" evidence="1">
    <location>
        <begin position="322"/>
        <end position="323"/>
    </location>
    <ligand>
        <name>substrate</name>
    </ligand>
</feature>
<comment type="function">
    <text evidence="1">Catalyzes the reversible cyclization of carbamoyl aspartate to dihydroorotate.</text>
</comment>
<comment type="catalytic activity">
    <reaction evidence="1">
        <text>(S)-dihydroorotate + H2O = N-carbamoyl-L-aspartate + H(+)</text>
        <dbReference type="Rhea" id="RHEA:24296"/>
        <dbReference type="ChEBI" id="CHEBI:15377"/>
        <dbReference type="ChEBI" id="CHEBI:15378"/>
        <dbReference type="ChEBI" id="CHEBI:30864"/>
        <dbReference type="ChEBI" id="CHEBI:32814"/>
        <dbReference type="EC" id="3.5.2.3"/>
    </reaction>
</comment>
<comment type="cofactor">
    <cofactor evidence="1">
        <name>Zn(2+)</name>
        <dbReference type="ChEBI" id="CHEBI:29105"/>
    </cofactor>
    <text evidence="1">Binds 2 Zn(2+) ions per subunit.</text>
</comment>
<comment type="pathway">
    <text evidence="1">Pyrimidine metabolism; UMP biosynthesis via de novo pathway; (S)-dihydroorotate from bicarbonate: step 3/3.</text>
</comment>
<comment type="similarity">
    <text evidence="1">Belongs to the metallo-dependent hydrolases superfamily. DHOase family. Class I DHOase subfamily.</text>
</comment>
<sequence length="430" mass="45240">MSVLIRGVRPYGEGERVDVLVDDGQIAQIGPDLAIPDTADVIDATGHVLLPGFVDLHTHLREPGREYAEDIETGSAAAALGGYTAVFAMANTNPVADSPVVTDHVWHRGQQVGLVDVHPVGAVTVGLAGAELTEMGMMNAGAAQVRMFSDDGVCVHDPLIMRRALEYATGLGVLIAQHAEEPRLTVGAFAHEGPMAARLGLAGWPRAAEESIVARDALLARDAGARVHICHASAAGTVEILKWAKDQGISITAEVTPHHLLLDDARLASYDGVNRVNPPLREASDAVALRQALADGIIDCVATDHAPHAEHEKCVEFAAARPGMLGLQTALSVVVQTMVAPGLLSWRDIARVMSENPACIARLPDQGRPLEVGEPANLTVVDPDATWTVTGADLASRSANTPFESMSLPATVTATLLRGKVTARDGKIRA</sequence>
<proteinExistence type="inferred from homology"/>
<dbReference type="EC" id="3.5.2.3" evidence="1"/>
<dbReference type="EMBL" id="LT708304">
    <property type="protein sequence ID" value="SIU00019.1"/>
    <property type="molecule type" value="Genomic_DNA"/>
</dbReference>
<dbReference type="RefSeq" id="NP_855068.1">
    <property type="nucleotide sequence ID" value="NC_002945.3"/>
</dbReference>
<dbReference type="RefSeq" id="WP_010950537.1">
    <property type="nucleotide sequence ID" value="NC_002945.4"/>
</dbReference>
<dbReference type="SMR" id="Q7U057"/>
<dbReference type="KEGG" id="mbo:BQ2027_MB1416"/>
<dbReference type="PATRIC" id="fig|233413.5.peg.1551"/>
<dbReference type="UniPathway" id="UPA00070">
    <property type="reaction ID" value="UER00117"/>
</dbReference>
<dbReference type="Proteomes" id="UP000001419">
    <property type="component" value="Chromosome"/>
</dbReference>
<dbReference type="GO" id="GO:0005737">
    <property type="term" value="C:cytoplasm"/>
    <property type="evidence" value="ECO:0007669"/>
    <property type="project" value="TreeGrafter"/>
</dbReference>
<dbReference type="GO" id="GO:0004038">
    <property type="term" value="F:allantoinase activity"/>
    <property type="evidence" value="ECO:0007669"/>
    <property type="project" value="TreeGrafter"/>
</dbReference>
<dbReference type="GO" id="GO:0004151">
    <property type="term" value="F:dihydroorotase activity"/>
    <property type="evidence" value="ECO:0007669"/>
    <property type="project" value="UniProtKB-UniRule"/>
</dbReference>
<dbReference type="GO" id="GO:0008270">
    <property type="term" value="F:zinc ion binding"/>
    <property type="evidence" value="ECO:0007669"/>
    <property type="project" value="UniProtKB-UniRule"/>
</dbReference>
<dbReference type="GO" id="GO:0044205">
    <property type="term" value="P:'de novo' UMP biosynthetic process"/>
    <property type="evidence" value="ECO:0007669"/>
    <property type="project" value="UniProtKB-UniRule"/>
</dbReference>
<dbReference type="GO" id="GO:0006145">
    <property type="term" value="P:purine nucleobase catabolic process"/>
    <property type="evidence" value="ECO:0007669"/>
    <property type="project" value="TreeGrafter"/>
</dbReference>
<dbReference type="CDD" id="cd01317">
    <property type="entry name" value="DHOase_IIa"/>
    <property type="match status" value="1"/>
</dbReference>
<dbReference type="Gene3D" id="3.20.20.140">
    <property type="entry name" value="Metal-dependent hydrolases"/>
    <property type="match status" value="1"/>
</dbReference>
<dbReference type="Gene3D" id="2.30.40.10">
    <property type="entry name" value="Urease, subunit C, domain 1"/>
    <property type="match status" value="1"/>
</dbReference>
<dbReference type="HAMAP" id="MF_00220_B">
    <property type="entry name" value="PyrC_classI_B"/>
    <property type="match status" value="1"/>
</dbReference>
<dbReference type="InterPro" id="IPR006680">
    <property type="entry name" value="Amidohydro-rel"/>
</dbReference>
<dbReference type="InterPro" id="IPR004722">
    <property type="entry name" value="DHOase"/>
</dbReference>
<dbReference type="InterPro" id="IPR050138">
    <property type="entry name" value="DHOase/Allantoinase_Hydrolase"/>
</dbReference>
<dbReference type="InterPro" id="IPR002195">
    <property type="entry name" value="Dihydroorotase_CS"/>
</dbReference>
<dbReference type="InterPro" id="IPR011059">
    <property type="entry name" value="Metal-dep_hydrolase_composite"/>
</dbReference>
<dbReference type="InterPro" id="IPR032466">
    <property type="entry name" value="Metal_Hydrolase"/>
</dbReference>
<dbReference type="NCBIfam" id="NF006836">
    <property type="entry name" value="PRK09357.1-1"/>
    <property type="match status" value="1"/>
</dbReference>
<dbReference type="NCBIfam" id="TIGR00857">
    <property type="entry name" value="pyrC_multi"/>
    <property type="match status" value="1"/>
</dbReference>
<dbReference type="PANTHER" id="PTHR43668">
    <property type="entry name" value="ALLANTOINASE"/>
    <property type="match status" value="1"/>
</dbReference>
<dbReference type="PANTHER" id="PTHR43668:SF2">
    <property type="entry name" value="ALLANTOINASE"/>
    <property type="match status" value="1"/>
</dbReference>
<dbReference type="Pfam" id="PF01979">
    <property type="entry name" value="Amidohydro_1"/>
    <property type="match status" value="1"/>
</dbReference>
<dbReference type="SUPFAM" id="SSF51338">
    <property type="entry name" value="Composite domain of metallo-dependent hydrolases"/>
    <property type="match status" value="1"/>
</dbReference>
<dbReference type="SUPFAM" id="SSF51556">
    <property type="entry name" value="Metallo-dependent hydrolases"/>
    <property type="match status" value="1"/>
</dbReference>
<dbReference type="PROSITE" id="PS00483">
    <property type="entry name" value="DIHYDROOROTASE_2"/>
    <property type="match status" value="1"/>
</dbReference>
<evidence type="ECO:0000255" key="1">
    <source>
        <dbReference type="HAMAP-Rule" id="MF_00220"/>
    </source>
</evidence>
<gene>
    <name evidence="1" type="primary">pyrC</name>
    <name type="ordered locus">BQ2027_MB1416</name>
</gene>